<protein>
    <recommendedName>
        <fullName>Ecto-ADP-ribosyltransferase 5</fullName>
        <ecNumber>2.4.2.31</ecNumber>
    </recommendedName>
    <alternativeName>
        <fullName>ADP-ribosyltransferase C2 and C3 toxin-like 5</fullName>
        <shortName>ARTC5</shortName>
    </alternativeName>
    <alternativeName>
        <fullName>Mono(ADP-ribosyl)transferase 5</fullName>
    </alternativeName>
    <alternativeName>
        <fullName>NAD(P)(+)--arginine ADP-ribosyltransferase 5</fullName>
    </alternativeName>
</protein>
<evidence type="ECO:0000250" key="1"/>
<evidence type="ECO:0000255" key="2"/>
<evidence type="ECO:0000255" key="3">
    <source>
        <dbReference type="PROSITE-ProRule" id="PRU01340"/>
    </source>
</evidence>
<evidence type="ECO:0000305" key="4"/>
<accession>Q5XHY4</accession>
<gene>
    <name type="primary">Art5</name>
</gene>
<keyword id="KW-1015">Disulfide bond</keyword>
<keyword id="KW-0325">Glycoprotein</keyword>
<keyword id="KW-0328">Glycosyltransferase</keyword>
<keyword id="KW-0472">Membrane</keyword>
<keyword id="KW-0520">NAD</keyword>
<keyword id="KW-0521">NADP</keyword>
<keyword id="KW-0548">Nucleotidyltransferase</keyword>
<keyword id="KW-1185">Reference proteome</keyword>
<keyword id="KW-0964">Secreted</keyword>
<keyword id="KW-0732">Signal</keyword>
<keyword id="KW-0808">Transferase</keyword>
<organism>
    <name type="scientific">Rattus norvegicus</name>
    <name type="common">Rat</name>
    <dbReference type="NCBI Taxonomy" id="10116"/>
    <lineage>
        <taxon>Eukaryota</taxon>
        <taxon>Metazoa</taxon>
        <taxon>Chordata</taxon>
        <taxon>Craniata</taxon>
        <taxon>Vertebrata</taxon>
        <taxon>Euteleostomi</taxon>
        <taxon>Mammalia</taxon>
        <taxon>Eutheria</taxon>
        <taxon>Euarchontoglires</taxon>
        <taxon>Glires</taxon>
        <taxon>Rodentia</taxon>
        <taxon>Myomorpha</taxon>
        <taxon>Muroidea</taxon>
        <taxon>Muridae</taxon>
        <taxon>Murinae</taxon>
        <taxon>Rattus</taxon>
    </lineage>
</organism>
<feature type="signal peptide" evidence="2">
    <location>
        <begin position="1"/>
        <end position="23"/>
    </location>
</feature>
<feature type="chain" id="PRO_0000379472" description="Ecto-ADP-ribosyltransferase 5">
    <location>
        <begin position="24"/>
        <end position="308"/>
    </location>
</feature>
<feature type="domain" description="TR mART core" evidence="3">
    <location>
        <begin position="63"/>
        <end position="253"/>
    </location>
</feature>
<feature type="active site" evidence="3">
    <location>
        <position position="161"/>
    </location>
</feature>
<feature type="active site" evidence="3">
    <location>
        <position position="184"/>
    </location>
</feature>
<feature type="active site" evidence="3">
    <location>
        <position position="222"/>
    </location>
</feature>
<feature type="binding site" evidence="1">
    <location>
        <position position="100"/>
    </location>
    <ligand>
        <name>NAD(+)</name>
        <dbReference type="ChEBI" id="CHEBI:57540"/>
    </ligand>
</feature>
<feature type="binding site" evidence="1">
    <location>
        <position position="161"/>
    </location>
    <ligand>
        <name>NAD(+)</name>
        <dbReference type="ChEBI" id="CHEBI:57540"/>
    </ligand>
</feature>
<feature type="binding site" evidence="1">
    <location>
        <position position="181"/>
    </location>
    <ligand>
        <name>NAD(+)</name>
        <dbReference type="ChEBI" id="CHEBI:57540"/>
    </ligand>
</feature>
<feature type="binding site" evidence="1">
    <location>
        <position position="215"/>
    </location>
    <ligand>
        <name>NAD(+)</name>
        <dbReference type="ChEBI" id="CHEBI:57540"/>
    </ligand>
</feature>
<feature type="glycosylation site" description="N-linked (GlcNAc...) asparagine" evidence="2">
    <location>
        <position position="102"/>
    </location>
</feature>
<feature type="glycosylation site" description="N-linked (GlcNAc...) asparagine" evidence="2">
    <location>
        <position position="197"/>
    </location>
</feature>
<feature type="glycosylation site" description="N-linked (GlcNAc...) asparagine" evidence="2">
    <location>
        <position position="251"/>
    </location>
</feature>
<feature type="disulfide bond" evidence="1">
    <location>
        <begin position="43"/>
        <end position="259"/>
    </location>
</feature>
<reference key="1">
    <citation type="journal article" date="2004" name="Genome Res.">
        <title>The status, quality, and expansion of the NIH full-length cDNA project: the Mammalian Gene Collection (MGC).</title>
        <authorList>
            <consortium name="The MGC Project Team"/>
        </authorList>
    </citation>
    <scope>NUCLEOTIDE SEQUENCE [LARGE SCALE MRNA]</scope>
    <source>
        <tissue>Testis</tissue>
    </source>
</reference>
<sequence>MILEDLLMVLSCLALHILWKVQAVPILPLSLVPDTFDDAYVGCSEEMEEKAGLLLKEEMARHALLRESWEAAQEAWAHGRHKLTLPPGFKAQHGVAVMVYTNSSNTLYWELNQAVRTGGRSRELYMRHFPFKALHFYLTRALQLLRGTGGCSREAGEVVFRGVSSLHFEPKRLGDSVRLGQFASSSVDERVARRFGNATFFNLRTCFGAPIQALSVFPEEREVLIPPHEVFLVTGFSQDGAQSIVTLWSYNQTCSHFNCAYLGGEKRRGCVSSRAGQPESFSTEALALQSGKTLLLAPGELQLSRAGP</sequence>
<proteinExistence type="evidence at transcript level"/>
<comment type="catalytic activity">
    <reaction>
        <text>L-arginyl-[protein] + NAD(+) = N(omega)-(ADP-D-ribosyl)-L-arginyl-[protein] + nicotinamide + H(+)</text>
        <dbReference type="Rhea" id="RHEA:19149"/>
        <dbReference type="Rhea" id="RHEA-COMP:10532"/>
        <dbReference type="Rhea" id="RHEA-COMP:15087"/>
        <dbReference type="ChEBI" id="CHEBI:15378"/>
        <dbReference type="ChEBI" id="CHEBI:17154"/>
        <dbReference type="ChEBI" id="CHEBI:29965"/>
        <dbReference type="ChEBI" id="CHEBI:57540"/>
        <dbReference type="ChEBI" id="CHEBI:142554"/>
        <dbReference type="EC" id="2.4.2.31"/>
    </reaction>
</comment>
<comment type="subcellular location">
    <subcellularLocation>
        <location evidence="4">Secreted</location>
    </subcellularLocation>
    <subcellularLocation>
        <location evidence="4">Membrane</location>
    </subcellularLocation>
    <text evidence="4">Membrane-associated.</text>
</comment>
<comment type="similarity">
    <text evidence="4">Belongs to the Arg-specific ADP-ribosyltransferase family.</text>
</comment>
<name>NAR5_RAT</name>
<dbReference type="EC" id="2.4.2.31"/>
<dbReference type="EMBL" id="BC083915">
    <property type="protein sequence ID" value="AAH83915.1"/>
    <property type="molecule type" value="mRNA"/>
</dbReference>
<dbReference type="RefSeq" id="NP_001013057.1">
    <property type="nucleotide sequence ID" value="NM_001013039.1"/>
</dbReference>
<dbReference type="RefSeq" id="XP_017444328.1">
    <property type="nucleotide sequence ID" value="XM_017588839.3"/>
</dbReference>
<dbReference type="RefSeq" id="XP_063138431.1">
    <property type="nucleotide sequence ID" value="XM_063282361.1"/>
</dbReference>
<dbReference type="SMR" id="Q5XHY4"/>
<dbReference type="FunCoup" id="Q5XHY4">
    <property type="interactions" value="205"/>
</dbReference>
<dbReference type="STRING" id="10116.ENSRNOP00000052118"/>
<dbReference type="GlyCosmos" id="Q5XHY4">
    <property type="glycosylation" value="3 sites, No reported glycans"/>
</dbReference>
<dbReference type="GlyGen" id="Q5XHY4">
    <property type="glycosylation" value="3 sites"/>
</dbReference>
<dbReference type="PhosphoSitePlus" id="Q5XHY4"/>
<dbReference type="PaxDb" id="10116-ENSRNOP00000052118"/>
<dbReference type="GeneID" id="259167"/>
<dbReference type="KEGG" id="rno:259167"/>
<dbReference type="UCSC" id="RGD:628834">
    <property type="organism name" value="rat"/>
</dbReference>
<dbReference type="AGR" id="RGD:628834"/>
<dbReference type="CTD" id="116969"/>
<dbReference type="RGD" id="628834">
    <property type="gene designation" value="Art5"/>
</dbReference>
<dbReference type="VEuPathDB" id="HostDB:ENSRNOG00000020242"/>
<dbReference type="eggNOG" id="ENOG502SKQR">
    <property type="taxonomic scope" value="Eukaryota"/>
</dbReference>
<dbReference type="HOGENOM" id="CLU_059744_3_0_1"/>
<dbReference type="InParanoid" id="Q5XHY4"/>
<dbReference type="OrthoDB" id="423533at2759"/>
<dbReference type="PhylomeDB" id="Q5XHY4"/>
<dbReference type="PRO" id="PR:Q5XHY4"/>
<dbReference type="Proteomes" id="UP000002494">
    <property type="component" value="Chromosome 1"/>
</dbReference>
<dbReference type="Bgee" id="ENSRNOG00000020242">
    <property type="expression patterns" value="Expressed in skeletal muscle tissue and 5 other cell types or tissues"/>
</dbReference>
<dbReference type="GO" id="GO:0005576">
    <property type="term" value="C:extracellular region"/>
    <property type="evidence" value="ECO:0007669"/>
    <property type="project" value="UniProtKB-SubCell"/>
</dbReference>
<dbReference type="GO" id="GO:0016020">
    <property type="term" value="C:membrane"/>
    <property type="evidence" value="ECO:0007669"/>
    <property type="project" value="UniProtKB-SubCell"/>
</dbReference>
<dbReference type="GO" id="GO:0003950">
    <property type="term" value="F:NAD+ poly-ADP-ribosyltransferase activity"/>
    <property type="evidence" value="ECO:0000318"/>
    <property type="project" value="GO_Central"/>
</dbReference>
<dbReference type="GO" id="GO:0106274">
    <property type="term" value="F:NAD+-protein-arginine ADP-ribosyltransferase activity"/>
    <property type="evidence" value="ECO:0007669"/>
    <property type="project" value="UniProtKB-EC"/>
</dbReference>
<dbReference type="GO" id="GO:0016779">
    <property type="term" value="F:nucleotidyltransferase activity"/>
    <property type="evidence" value="ECO:0007669"/>
    <property type="project" value="UniProtKB-KW"/>
</dbReference>
<dbReference type="FunFam" id="3.90.176.10:FF:000001">
    <property type="entry name" value="NAD(P)(+)--arginine ADP-ribosyltransferase"/>
    <property type="match status" value="1"/>
</dbReference>
<dbReference type="Gene3D" id="3.90.176.10">
    <property type="entry name" value="Toxin ADP-ribosyltransferase, Chain A, domain 1"/>
    <property type="match status" value="1"/>
</dbReference>
<dbReference type="InterPro" id="IPR050999">
    <property type="entry name" value="ADP-ribosyltransferase_ARG"/>
</dbReference>
<dbReference type="InterPro" id="IPR000768">
    <property type="entry name" value="ART"/>
</dbReference>
<dbReference type="PANTHER" id="PTHR10339">
    <property type="entry name" value="ADP-RIBOSYLTRANSFERASE"/>
    <property type="match status" value="1"/>
</dbReference>
<dbReference type="PANTHER" id="PTHR10339:SF2">
    <property type="entry name" value="ECTO-ADP-RIBOSYLTRANSFERASE 5"/>
    <property type="match status" value="1"/>
</dbReference>
<dbReference type="Pfam" id="PF01129">
    <property type="entry name" value="ART"/>
    <property type="match status" value="1"/>
</dbReference>
<dbReference type="PRINTS" id="PR00970">
    <property type="entry name" value="RIBTRNSFRASE"/>
</dbReference>
<dbReference type="SUPFAM" id="SSF56399">
    <property type="entry name" value="ADP-ribosylation"/>
    <property type="match status" value="1"/>
</dbReference>
<dbReference type="PROSITE" id="PS01291">
    <property type="entry name" value="ART"/>
    <property type="match status" value="1"/>
</dbReference>
<dbReference type="PROSITE" id="PS51996">
    <property type="entry name" value="TR_MART"/>
    <property type="match status" value="1"/>
</dbReference>